<dbReference type="EC" id="1.6.2.2"/>
<dbReference type="EMBL" id="CP000498">
    <property type="protein sequence ID" value="ABN66017.2"/>
    <property type="molecule type" value="Genomic_DNA"/>
</dbReference>
<dbReference type="SMR" id="A3LT66"/>
<dbReference type="FunCoup" id="A3LT66">
    <property type="interactions" value="344"/>
</dbReference>
<dbReference type="STRING" id="322104.A3LT66"/>
<dbReference type="KEGG" id="pic:PICST_44816"/>
<dbReference type="eggNOG" id="KOG0534">
    <property type="taxonomic scope" value="Eukaryota"/>
</dbReference>
<dbReference type="HOGENOM" id="CLU_003827_9_1_1"/>
<dbReference type="InParanoid" id="A3LT66"/>
<dbReference type="OMA" id="KGPEMQK"/>
<dbReference type="OrthoDB" id="432685at2759"/>
<dbReference type="Proteomes" id="UP000002258">
    <property type="component" value="Chromosome 4"/>
</dbReference>
<dbReference type="GO" id="GO:0005741">
    <property type="term" value="C:mitochondrial outer membrane"/>
    <property type="evidence" value="ECO:0007669"/>
    <property type="project" value="UniProtKB-SubCell"/>
</dbReference>
<dbReference type="GO" id="GO:0004128">
    <property type="term" value="F:cytochrome-b5 reductase activity, acting on NAD(P)H"/>
    <property type="evidence" value="ECO:0007669"/>
    <property type="project" value="UniProtKB-EC"/>
</dbReference>
<dbReference type="GO" id="GO:0006696">
    <property type="term" value="P:ergosterol biosynthetic process"/>
    <property type="evidence" value="ECO:0007669"/>
    <property type="project" value="TreeGrafter"/>
</dbReference>
<dbReference type="CDD" id="cd06183">
    <property type="entry name" value="cyt_b5_reduct_like"/>
    <property type="match status" value="1"/>
</dbReference>
<dbReference type="FunFam" id="2.40.30.10:FF:000032">
    <property type="entry name" value="NADH-cytochrome b5 reductase"/>
    <property type="match status" value="1"/>
</dbReference>
<dbReference type="FunFam" id="3.40.50.80:FF:000009">
    <property type="entry name" value="NADH-cytochrome b5 reductase"/>
    <property type="match status" value="1"/>
</dbReference>
<dbReference type="Gene3D" id="3.40.50.80">
    <property type="entry name" value="Nucleotide-binding domain of ferredoxin-NADP reductase (FNR) module"/>
    <property type="match status" value="1"/>
</dbReference>
<dbReference type="Gene3D" id="2.40.30.10">
    <property type="entry name" value="Translation factors"/>
    <property type="match status" value="1"/>
</dbReference>
<dbReference type="InterPro" id="IPR001834">
    <property type="entry name" value="CBR-like"/>
</dbReference>
<dbReference type="InterPro" id="IPR008333">
    <property type="entry name" value="Cbr1-like_FAD-bd_dom"/>
</dbReference>
<dbReference type="InterPro" id="IPR017927">
    <property type="entry name" value="FAD-bd_FR_type"/>
</dbReference>
<dbReference type="InterPro" id="IPR001709">
    <property type="entry name" value="Flavoprot_Pyr_Nucl_cyt_Rdtase"/>
</dbReference>
<dbReference type="InterPro" id="IPR039261">
    <property type="entry name" value="FNR_nucleotide-bd"/>
</dbReference>
<dbReference type="InterPro" id="IPR001433">
    <property type="entry name" value="OxRdtase_FAD/NAD-bd"/>
</dbReference>
<dbReference type="InterPro" id="IPR017938">
    <property type="entry name" value="Riboflavin_synthase-like_b-brl"/>
</dbReference>
<dbReference type="PANTHER" id="PTHR19370">
    <property type="entry name" value="NADH-CYTOCHROME B5 REDUCTASE"/>
    <property type="match status" value="1"/>
</dbReference>
<dbReference type="PANTHER" id="PTHR19370:SF171">
    <property type="entry name" value="NADH-CYTOCHROME B5 REDUCTASE 2"/>
    <property type="match status" value="1"/>
</dbReference>
<dbReference type="Pfam" id="PF00970">
    <property type="entry name" value="FAD_binding_6"/>
    <property type="match status" value="1"/>
</dbReference>
<dbReference type="Pfam" id="PF00175">
    <property type="entry name" value="NAD_binding_1"/>
    <property type="match status" value="1"/>
</dbReference>
<dbReference type="PRINTS" id="PR00406">
    <property type="entry name" value="CYTB5RDTASE"/>
</dbReference>
<dbReference type="PRINTS" id="PR00371">
    <property type="entry name" value="FPNCR"/>
</dbReference>
<dbReference type="SUPFAM" id="SSF52343">
    <property type="entry name" value="Ferredoxin reductase-like, C-terminal NADP-linked domain"/>
    <property type="match status" value="1"/>
</dbReference>
<dbReference type="SUPFAM" id="SSF63380">
    <property type="entry name" value="Riboflavin synthase domain-like"/>
    <property type="match status" value="1"/>
</dbReference>
<dbReference type="PROSITE" id="PS51384">
    <property type="entry name" value="FAD_FR"/>
    <property type="match status" value="1"/>
</dbReference>
<gene>
    <name type="primary">MCR1</name>
    <name type="ORF">PICST_44816</name>
</gene>
<protein>
    <recommendedName>
        <fullName>NADH-cytochrome b5 reductase 2</fullName>
        <ecNumber>1.6.2.2</ecNumber>
    </recommendedName>
    <alternativeName>
        <fullName>Mitochondrial cytochrome b reductase</fullName>
    </alternativeName>
</protein>
<keyword id="KW-0274">FAD</keyword>
<keyword id="KW-0285">Flavoprotein</keyword>
<keyword id="KW-0472">Membrane</keyword>
<keyword id="KW-0496">Mitochondrion</keyword>
<keyword id="KW-1000">Mitochondrion outer membrane</keyword>
<keyword id="KW-0520">NAD</keyword>
<keyword id="KW-0560">Oxidoreductase</keyword>
<keyword id="KW-1185">Reference proteome</keyword>
<keyword id="KW-0812">Transmembrane</keyword>
<keyword id="KW-1133">Transmembrane helix</keyword>
<name>MCR1_PICST</name>
<feature type="chain" id="PRO_0000330189" description="NADH-cytochrome b5 reductase 2">
    <location>
        <begin position="1"/>
        <end position="298"/>
    </location>
</feature>
<feature type="transmembrane region" description="Helical" evidence="2">
    <location>
        <begin position="15"/>
        <end position="38"/>
    </location>
</feature>
<feature type="domain" description="FAD-binding FR-type" evidence="3">
    <location>
        <begin position="49"/>
        <end position="153"/>
    </location>
</feature>
<feature type="binding site" evidence="1">
    <location>
        <begin position="156"/>
        <end position="191"/>
    </location>
    <ligand>
        <name>FAD</name>
        <dbReference type="ChEBI" id="CHEBI:57692"/>
    </ligand>
</feature>
<sequence length="298" mass="32581">MSFSRSFSRLASSKFVLPVAAAAVGLASYSFTSSSFIANEPSKAFKGGDEWIDLKLISSHDLSHDTKHLVFELPNKDDVSGLVTASLLMTKFVTPKGSNVIRPYTPVSDTEQAGTIDFVVKKYEGGKMSSHIHDLKPNDTLSFKGPFVKWKWEPNQFKSIALIGGGTGITPLYQLIHEITKNPADKTQVSLFYGSQTPDDILIKKELDALAAKHKDQVKIVYFVDKADASWKGETGYISKEFLQKNLPAPGPDNKIFVCGPPPLYKAVSGPKVSPTDQGELTGSLAELGFSKENVFKF</sequence>
<proteinExistence type="inferred from homology"/>
<accession>A3LT66</accession>
<reference key="1">
    <citation type="journal article" date="2007" name="Nat. Biotechnol.">
        <title>Genome sequence of the lignocellulose-bioconverting and xylose-fermenting yeast Pichia stipitis.</title>
        <authorList>
            <person name="Jeffries T.W."/>
            <person name="Grigoriev I.V."/>
            <person name="Grimwood J."/>
            <person name="Laplaza J.M."/>
            <person name="Aerts A."/>
            <person name="Salamov A."/>
            <person name="Schmutz J."/>
            <person name="Lindquist E."/>
            <person name="Dehal P."/>
            <person name="Shapiro H."/>
            <person name="Jin Y.-S."/>
            <person name="Passoth V."/>
            <person name="Richardson P.M."/>
        </authorList>
    </citation>
    <scope>NUCLEOTIDE SEQUENCE [LARGE SCALE GENOMIC DNA]</scope>
    <source>
        <strain>ATCC 58785 / CBS 6054 / NBRC 10063 / NRRL Y-11545</strain>
    </source>
</reference>
<organism>
    <name type="scientific">Scheffersomyces stipitis (strain ATCC 58785 / CBS 6054 / NBRC 10063 / NRRL Y-11545)</name>
    <name type="common">Yeast</name>
    <name type="synonym">Pichia stipitis</name>
    <dbReference type="NCBI Taxonomy" id="322104"/>
    <lineage>
        <taxon>Eukaryota</taxon>
        <taxon>Fungi</taxon>
        <taxon>Dikarya</taxon>
        <taxon>Ascomycota</taxon>
        <taxon>Saccharomycotina</taxon>
        <taxon>Pichiomycetes</taxon>
        <taxon>Debaryomycetaceae</taxon>
        <taxon>Scheffersomyces</taxon>
    </lineage>
</organism>
<comment type="function">
    <text evidence="1">May mediate the reduction of outer membrane cytochrome b5.</text>
</comment>
<comment type="catalytic activity">
    <reaction>
        <text>2 Fe(III)-[cytochrome b5] + NADH = 2 Fe(II)-[cytochrome b5] + NAD(+) + H(+)</text>
        <dbReference type="Rhea" id="RHEA:46680"/>
        <dbReference type="Rhea" id="RHEA-COMP:10438"/>
        <dbReference type="Rhea" id="RHEA-COMP:10439"/>
        <dbReference type="ChEBI" id="CHEBI:15378"/>
        <dbReference type="ChEBI" id="CHEBI:29033"/>
        <dbReference type="ChEBI" id="CHEBI:29034"/>
        <dbReference type="ChEBI" id="CHEBI:57540"/>
        <dbReference type="ChEBI" id="CHEBI:57945"/>
        <dbReference type="EC" id="1.6.2.2"/>
    </reaction>
</comment>
<comment type="cofactor">
    <cofactor evidence="1">
        <name>FAD</name>
        <dbReference type="ChEBI" id="CHEBI:57692"/>
    </cofactor>
</comment>
<comment type="subcellular location">
    <subcellularLocation>
        <location evidence="1">Mitochondrion outer membrane</location>
        <topology evidence="1">Single-pass membrane protein</topology>
    </subcellularLocation>
</comment>
<comment type="similarity">
    <text evidence="4">Belongs to the flavoprotein pyridine nucleotide cytochrome reductase family.</text>
</comment>
<evidence type="ECO:0000250" key="1"/>
<evidence type="ECO:0000255" key="2"/>
<evidence type="ECO:0000255" key="3">
    <source>
        <dbReference type="PROSITE-ProRule" id="PRU00716"/>
    </source>
</evidence>
<evidence type="ECO:0000305" key="4"/>